<comment type="function">
    <text evidence="1">This protein is involved in the repair of mismatches in DNA. It is required for dam-dependent methyl-directed DNA mismatch repair. May act as a 'molecular matchmaker', a protein that promotes the formation of a stable complex between two or more DNA-binding proteins in an ATP-dependent manner without itself being part of a final effector complex.</text>
</comment>
<comment type="similarity">
    <text evidence="1">Belongs to the DNA mismatch repair MutL/HexB family.</text>
</comment>
<gene>
    <name evidence="1" type="primary">mutL</name>
    <name type="ordered locus">BARBAKC583_1201</name>
</gene>
<reference key="1">
    <citation type="submission" date="2006-12" db="EMBL/GenBank/DDBJ databases">
        <authorList>
            <person name="Hendrix L."/>
            <person name="Mohamoud Y."/>
            <person name="Radune D."/>
            <person name="Shvartsbeyn A."/>
            <person name="Daugherty S."/>
            <person name="Dodson R."/>
            <person name="Durkin A.S."/>
            <person name="Harkins D."/>
            <person name="Huot H."/>
            <person name="Kothari S.P."/>
            <person name="Madupu R."/>
            <person name="Li J."/>
            <person name="Nelson W.C."/>
            <person name="Shrivastava S."/>
            <person name="Giglio M.G."/>
            <person name="Haft D."/>
            <person name="Selengut J."/>
            <person name="Fraser-Ligget C."/>
            <person name="Seshadri R."/>
        </authorList>
    </citation>
    <scope>NUCLEOTIDE SEQUENCE [LARGE SCALE GENOMIC DNA]</scope>
    <source>
        <strain>ATCC 35685 / KC583 / Herrer 020/F12,63</strain>
    </source>
</reference>
<proteinExistence type="inferred from homology"/>
<sequence length="611" mass="67261">MIIRHLSENIINQIAAGEVIERPANVIKELVENAIDAQATRIEISIVNGGKNFIRVSDNGCGIPADQLTLAVSRHCTSKIVDDVSNICFLGFRGEALPSIGSVAKLKLTSRTQDADNANEISVIAGKIEGPKPAAANPGTIVEVRDLFFVTPARLKFMKTDRAETSAITDMIKRIAIAFPHIRFSLSSTDRMLMEFPATENNTQGQLQRITQIMGKEFAPNSIALNAERESVRLTGFTCLPSFNRSNSLHQFAYVNGRPVRDKLLWGAIRGAYADAIARDRHAVSIIFIDLPPADVDVNVHPTKADVRFRDPGLIRGLIIGAIHEALHQAGVRHTSTHSESVLTAFQIHPLENLKSAQRPFSYTSQPYHRVSTTTSMLQKPLDDSIDLREGIVPMMECLSAPSSDTRATIQTSPTEELHYPLGAAKAQIHKNYIISQTQDSLIIVDQHAAHERLVYEALKNALYSKPLSSQLLLIPEIVELSEEDAACLLTHKDSLQKFGLGIEPFGPGAILVRETPAMLGEINAQALIKDLADEAAEYDTTNNLKAMLDYVAATMACHSSVRSGRLLRPEEMNALLRQIEETPHSSTCNHGRPTYIELKLADIERLFGRK</sequence>
<evidence type="ECO:0000255" key="1">
    <source>
        <dbReference type="HAMAP-Rule" id="MF_00149"/>
    </source>
</evidence>
<feature type="chain" id="PRO_1000009984" description="DNA mismatch repair protein MutL">
    <location>
        <begin position="1"/>
        <end position="611"/>
    </location>
</feature>
<protein>
    <recommendedName>
        <fullName evidence="1">DNA mismatch repair protein MutL</fullName>
    </recommendedName>
</protein>
<keyword id="KW-0227">DNA damage</keyword>
<keyword id="KW-0234">DNA repair</keyword>
<name>MUTL_BARBK</name>
<accession>A1UU01</accession>
<organism>
    <name type="scientific">Bartonella bacilliformis (strain ATCC 35685 / KC583 / Herrer 020/F12,63)</name>
    <dbReference type="NCBI Taxonomy" id="360095"/>
    <lineage>
        <taxon>Bacteria</taxon>
        <taxon>Pseudomonadati</taxon>
        <taxon>Pseudomonadota</taxon>
        <taxon>Alphaproteobacteria</taxon>
        <taxon>Hyphomicrobiales</taxon>
        <taxon>Bartonellaceae</taxon>
        <taxon>Bartonella</taxon>
    </lineage>
</organism>
<dbReference type="EMBL" id="CP000524">
    <property type="protein sequence ID" value="ABM44985.1"/>
    <property type="molecule type" value="Genomic_DNA"/>
</dbReference>
<dbReference type="RefSeq" id="WP_005767876.1">
    <property type="nucleotide sequence ID" value="NC_008783.1"/>
</dbReference>
<dbReference type="SMR" id="A1UU01"/>
<dbReference type="STRING" id="360095.BARBAKC583_1201"/>
<dbReference type="GeneID" id="4685091"/>
<dbReference type="KEGG" id="bbk:BARBAKC583_1201"/>
<dbReference type="PATRIC" id="fig|360095.6.peg.1170"/>
<dbReference type="eggNOG" id="COG0323">
    <property type="taxonomic scope" value="Bacteria"/>
</dbReference>
<dbReference type="HOGENOM" id="CLU_004131_4_2_5"/>
<dbReference type="OrthoDB" id="9763467at2"/>
<dbReference type="Proteomes" id="UP000000643">
    <property type="component" value="Chromosome"/>
</dbReference>
<dbReference type="GO" id="GO:0032300">
    <property type="term" value="C:mismatch repair complex"/>
    <property type="evidence" value="ECO:0007669"/>
    <property type="project" value="InterPro"/>
</dbReference>
<dbReference type="GO" id="GO:0005524">
    <property type="term" value="F:ATP binding"/>
    <property type="evidence" value="ECO:0007669"/>
    <property type="project" value="InterPro"/>
</dbReference>
<dbReference type="GO" id="GO:0016887">
    <property type="term" value="F:ATP hydrolysis activity"/>
    <property type="evidence" value="ECO:0007669"/>
    <property type="project" value="InterPro"/>
</dbReference>
<dbReference type="GO" id="GO:0140664">
    <property type="term" value="F:ATP-dependent DNA damage sensor activity"/>
    <property type="evidence" value="ECO:0007669"/>
    <property type="project" value="InterPro"/>
</dbReference>
<dbReference type="GO" id="GO:0030983">
    <property type="term" value="F:mismatched DNA binding"/>
    <property type="evidence" value="ECO:0007669"/>
    <property type="project" value="InterPro"/>
</dbReference>
<dbReference type="GO" id="GO:0006298">
    <property type="term" value="P:mismatch repair"/>
    <property type="evidence" value="ECO:0007669"/>
    <property type="project" value="UniProtKB-UniRule"/>
</dbReference>
<dbReference type="CDD" id="cd16926">
    <property type="entry name" value="HATPase_MutL-MLH-PMS-like"/>
    <property type="match status" value="1"/>
</dbReference>
<dbReference type="CDD" id="cd00782">
    <property type="entry name" value="MutL_Trans"/>
    <property type="match status" value="1"/>
</dbReference>
<dbReference type="FunFam" id="3.30.565.10:FF:000003">
    <property type="entry name" value="DNA mismatch repair endonuclease MutL"/>
    <property type="match status" value="1"/>
</dbReference>
<dbReference type="Gene3D" id="3.30.230.10">
    <property type="match status" value="1"/>
</dbReference>
<dbReference type="Gene3D" id="3.30.565.10">
    <property type="entry name" value="Histidine kinase-like ATPase, C-terminal domain"/>
    <property type="match status" value="1"/>
</dbReference>
<dbReference type="Gene3D" id="3.30.1540.20">
    <property type="entry name" value="MutL, C-terminal domain, dimerisation subdomain"/>
    <property type="match status" value="1"/>
</dbReference>
<dbReference type="Gene3D" id="3.30.1370.100">
    <property type="entry name" value="MutL, C-terminal domain, regulatory subdomain"/>
    <property type="match status" value="1"/>
</dbReference>
<dbReference type="HAMAP" id="MF_00149">
    <property type="entry name" value="DNA_mis_repair"/>
    <property type="match status" value="1"/>
</dbReference>
<dbReference type="InterPro" id="IPR014762">
    <property type="entry name" value="DNA_mismatch_repair_CS"/>
</dbReference>
<dbReference type="InterPro" id="IPR020667">
    <property type="entry name" value="DNA_mismatch_repair_MutL"/>
</dbReference>
<dbReference type="InterPro" id="IPR013507">
    <property type="entry name" value="DNA_mismatch_S5_2-like"/>
</dbReference>
<dbReference type="InterPro" id="IPR036890">
    <property type="entry name" value="HATPase_C_sf"/>
</dbReference>
<dbReference type="InterPro" id="IPR002099">
    <property type="entry name" value="MutL/Mlh/PMS"/>
</dbReference>
<dbReference type="InterPro" id="IPR038973">
    <property type="entry name" value="MutL/Mlh/Pms-like"/>
</dbReference>
<dbReference type="InterPro" id="IPR014790">
    <property type="entry name" value="MutL_C"/>
</dbReference>
<dbReference type="InterPro" id="IPR042120">
    <property type="entry name" value="MutL_C_dimsub"/>
</dbReference>
<dbReference type="InterPro" id="IPR042121">
    <property type="entry name" value="MutL_C_regsub"/>
</dbReference>
<dbReference type="InterPro" id="IPR037198">
    <property type="entry name" value="MutL_C_sf"/>
</dbReference>
<dbReference type="InterPro" id="IPR020568">
    <property type="entry name" value="Ribosomal_Su5_D2-typ_SF"/>
</dbReference>
<dbReference type="InterPro" id="IPR014721">
    <property type="entry name" value="Ribsml_uS5_D2-typ_fold_subgr"/>
</dbReference>
<dbReference type="NCBIfam" id="TIGR00585">
    <property type="entry name" value="mutl"/>
    <property type="match status" value="1"/>
</dbReference>
<dbReference type="NCBIfam" id="NF000953">
    <property type="entry name" value="PRK00095.2-4"/>
    <property type="match status" value="1"/>
</dbReference>
<dbReference type="PANTHER" id="PTHR10073">
    <property type="entry name" value="DNA MISMATCH REPAIR PROTEIN MLH, PMS, MUTL"/>
    <property type="match status" value="1"/>
</dbReference>
<dbReference type="PANTHER" id="PTHR10073:SF12">
    <property type="entry name" value="DNA MISMATCH REPAIR PROTEIN MLH1"/>
    <property type="match status" value="1"/>
</dbReference>
<dbReference type="Pfam" id="PF01119">
    <property type="entry name" value="DNA_mis_repair"/>
    <property type="match status" value="1"/>
</dbReference>
<dbReference type="Pfam" id="PF13589">
    <property type="entry name" value="HATPase_c_3"/>
    <property type="match status" value="1"/>
</dbReference>
<dbReference type="Pfam" id="PF08676">
    <property type="entry name" value="MutL_C"/>
    <property type="match status" value="1"/>
</dbReference>
<dbReference type="SMART" id="SM01340">
    <property type="entry name" value="DNA_mis_repair"/>
    <property type="match status" value="1"/>
</dbReference>
<dbReference type="SMART" id="SM00853">
    <property type="entry name" value="MutL_C"/>
    <property type="match status" value="1"/>
</dbReference>
<dbReference type="SUPFAM" id="SSF55874">
    <property type="entry name" value="ATPase domain of HSP90 chaperone/DNA topoisomerase II/histidine kinase"/>
    <property type="match status" value="1"/>
</dbReference>
<dbReference type="SUPFAM" id="SSF118116">
    <property type="entry name" value="DNA mismatch repair protein MutL"/>
    <property type="match status" value="1"/>
</dbReference>
<dbReference type="SUPFAM" id="SSF54211">
    <property type="entry name" value="Ribosomal protein S5 domain 2-like"/>
    <property type="match status" value="1"/>
</dbReference>
<dbReference type="PROSITE" id="PS00058">
    <property type="entry name" value="DNA_MISMATCH_REPAIR_1"/>
    <property type="match status" value="1"/>
</dbReference>